<accession>Q9V831</accession>
<accession>Q8MTU6</accession>
<keyword id="KW-0131">Cell cycle</keyword>
<keyword id="KW-0132">Cell division</keyword>
<keyword id="KW-0498">Mitosis</keyword>
<keyword id="KW-1185">Reference proteome</keyword>
<keyword id="KW-0833">Ubl conjugation pathway</keyword>
<feature type="chain" id="PRO_0000174013" description="Anaphase-promoting complex subunit 10">
    <location>
        <begin position="1"/>
        <end position="195"/>
    </location>
</feature>
<feature type="domain" description="DOC" evidence="2">
    <location>
        <begin position="9"/>
        <end position="193"/>
    </location>
</feature>
<feature type="region of interest" description="Disordered" evidence="3">
    <location>
        <begin position="1"/>
        <end position="21"/>
    </location>
</feature>
<gene>
    <name type="primary">APC10</name>
    <name type="ORF">CG11419</name>
</gene>
<proteinExistence type="evidence at transcript level"/>
<name>APC10_DROME</name>
<comment type="function">
    <text evidence="1">Component of the anaphase promoting complex/cyclosome (APC/C), a cell cycle-regulated ubiquitin ligase that controls progression through mitosis and the G1 phase of the cell cycle.</text>
</comment>
<comment type="subunit">
    <text evidence="1">The APC is composed of at least 11 subunits.</text>
</comment>
<comment type="similarity">
    <text evidence="4">Belongs to the APC10 family.</text>
</comment>
<dbReference type="EMBL" id="AE013599">
    <property type="protein sequence ID" value="AAF57848.2"/>
    <property type="molecule type" value="Genomic_DNA"/>
</dbReference>
<dbReference type="EMBL" id="AY071207">
    <property type="protein sequence ID" value="AAL48829.2"/>
    <property type="molecule type" value="mRNA"/>
</dbReference>
<dbReference type="RefSeq" id="NP_611223.4">
    <property type="nucleotide sequence ID" value="NM_137379.5"/>
</dbReference>
<dbReference type="SMR" id="Q9V831"/>
<dbReference type="BioGRID" id="62667">
    <property type="interactions" value="6"/>
</dbReference>
<dbReference type="ComplexPortal" id="CPX-2728">
    <property type="entry name" value="Anaphase-promoting complex"/>
</dbReference>
<dbReference type="DIP" id="DIP-19814N"/>
<dbReference type="FunCoup" id="Q9V831">
    <property type="interactions" value="1202"/>
</dbReference>
<dbReference type="IntAct" id="Q9V831">
    <property type="interactions" value="3"/>
</dbReference>
<dbReference type="STRING" id="7227.FBpp0086107"/>
<dbReference type="PaxDb" id="7227-FBpp0086107"/>
<dbReference type="DNASU" id="36975"/>
<dbReference type="EnsemblMetazoa" id="FBtr0086951">
    <property type="protein sequence ID" value="FBpp0086107"/>
    <property type="gene ID" value="FBgn0034231"/>
</dbReference>
<dbReference type="GeneID" id="36975"/>
<dbReference type="KEGG" id="dme:Dmel_CG11419"/>
<dbReference type="UCSC" id="CG11419-RA">
    <property type="organism name" value="d. melanogaster"/>
</dbReference>
<dbReference type="AGR" id="FB:FBgn0034231"/>
<dbReference type="CTD" id="36975"/>
<dbReference type="FlyBase" id="FBgn0034231">
    <property type="gene designation" value="APC10"/>
</dbReference>
<dbReference type="VEuPathDB" id="VectorBase:FBgn0034231"/>
<dbReference type="eggNOG" id="KOG3437">
    <property type="taxonomic scope" value="Eukaryota"/>
</dbReference>
<dbReference type="GeneTree" id="ENSGT00390000013722"/>
<dbReference type="HOGENOM" id="CLU_039415_3_0_1"/>
<dbReference type="InParanoid" id="Q9V831"/>
<dbReference type="OMA" id="FITIEFP"/>
<dbReference type="OrthoDB" id="24948at2759"/>
<dbReference type="PhylomeDB" id="Q9V831"/>
<dbReference type="Reactome" id="R-DME-141430">
    <property type="pathway name" value="Inactivation of APC/C via direct inhibition of the APC/C complex"/>
</dbReference>
<dbReference type="Reactome" id="R-DME-174048">
    <property type="pathway name" value="APC/C:Cdc20 mediated degradation of Cyclin B"/>
</dbReference>
<dbReference type="Reactome" id="R-DME-174084">
    <property type="pathway name" value="Autodegradation of Cdh1 by Cdh1:APC/C"/>
</dbReference>
<dbReference type="Reactome" id="R-DME-174154">
    <property type="pathway name" value="APC/C:Cdc20 mediated degradation of Securin"/>
</dbReference>
<dbReference type="Reactome" id="R-DME-174178">
    <property type="pathway name" value="APC/C:Cdh1 mediated degradation of Cdc20 and other APC/C:Cdh1 targeted proteins in late mitosis/early G1"/>
</dbReference>
<dbReference type="Reactome" id="R-DME-174184">
    <property type="pathway name" value="Cdc20:Phospho-APC/C mediated degradation of Cyclin A"/>
</dbReference>
<dbReference type="Reactome" id="R-DME-176407">
    <property type="pathway name" value="Conversion from APC/C:Cdc20 to APC/C:Cdh1 in late anaphase"/>
</dbReference>
<dbReference type="Reactome" id="R-DME-176408">
    <property type="pathway name" value="Regulation of APC/C activators between G1/S and early anaphase"/>
</dbReference>
<dbReference type="Reactome" id="R-DME-176409">
    <property type="pathway name" value="APC/C:Cdc20 mediated degradation of mitotic proteins"/>
</dbReference>
<dbReference type="Reactome" id="R-DME-176412">
    <property type="pathway name" value="Phosphorylation of the APC/C"/>
</dbReference>
<dbReference type="Reactome" id="R-DME-179409">
    <property type="pathway name" value="APC-Cdc20 mediated degradation of Nek2A"/>
</dbReference>
<dbReference type="Reactome" id="R-DME-2467813">
    <property type="pathway name" value="Separation of Sister Chromatids"/>
</dbReference>
<dbReference type="Reactome" id="R-DME-2559582">
    <property type="pathway name" value="Senescence-Associated Secretory Phenotype (SASP)"/>
</dbReference>
<dbReference type="Reactome" id="R-DME-69017">
    <property type="pathway name" value="CDK-mediated phosphorylation and removal of Cdc6"/>
</dbReference>
<dbReference type="Reactome" id="R-DME-983168">
    <property type="pathway name" value="Antigen processing: Ubiquitination &amp; Proteasome degradation"/>
</dbReference>
<dbReference type="BioGRID-ORCS" id="36975">
    <property type="hits" value="1 hit in 1 CRISPR screen"/>
</dbReference>
<dbReference type="GenomeRNAi" id="36975"/>
<dbReference type="PRO" id="PR:Q9V831"/>
<dbReference type="Proteomes" id="UP000000803">
    <property type="component" value="Chromosome 2R"/>
</dbReference>
<dbReference type="Bgee" id="FBgn0034231">
    <property type="expression patterns" value="Expressed in adult middle midgut class II enteroendocrine cell in adult midgut (Drosophila) and 81 other cell types or tissues"/>
</dbReference>
<dbReference type="GO" id="GO:0005680">
    <property type="term" value="C:anaphase-promoting complex"/>
    <property type="evidence" value="ECO:0000318"/>
    <property type="project" value="GO_Central"/>
</dbReference>
<dbReference type="GO" id="GO:0031145">
    <property type="term" value="P:anaphase-promoting complex-dependent catabolic process"/>
    <property type="evidence" value="ECO:0007669"/>
    <property type="project" value="InterPro"/>
</dbReference>
<dbReference type="GO" id="GO:0051301">
    <property type="term" value="P:cell division"/>
    <property type="evidence" value="ECO:0007669"/>
    <property type="project" value="UniProtKB-KW"/>
</dbReference>
<dbReference type="GO" id="GO:0007113">
    <property type="term" value="P:endomitotic cell cycle"/>
    <property type="evidence" value="ECO:0000316"/>
    <property type="project" value="FlyBase"/>
</dbReference>
<dbReference type="GO" id="GO:0000278">
    <property type="term" value="P:mitotic cell cycle"/>
    <property type="evidence" value="ECO:0007001"/>
    <property type="project" value="FlyBase"/>
</dbReference>
<dbReference type="GO" id="GO:0070979">
    <property type="term" value="P:protein K11-linked ubiquitination"/>
    <property type="evidence" value="ECO:0000318"/>
    <property type="project" value="GO_Central"/>
</dbReference>
<dbReference type="GO" id="GO:2000736">
    <property type="term" value="P:regulation of stem cell differentiation"/>
    <property type="evidence" value="ECO:0000315"/>
    <property type="project" value="FlyBase"/>
</dbReference>
<dbReference type="CDD" id="cd08366">
    <property type="entry name" value="APC10"/>
    <property type="match status" value="1"/>
</dbReference>
<dbReference type="FunFam" id="2.60.120.260:FF:000019">
    <property type="entry name" value="Anaphase-promoting complex subunit 10"/>
    <property type="match status" value="1"/>
</dbReference>
<dbReference type="Gene3D" id="2.60.120.260">
    <property type="entry name" value="Galactose-binding domain-like"/>
    <property type="match status" value="1"/>
</dbReference>
<dbReference type="InterPro" id="IPR016901">
    <property type="entry name" value="APC10/Doc1"/>
</dbReference>
<dbReference type="InterPro" id="IPR004939">
    <property type="entry name" value="APC_su10/DOC_dom"/>
</dbReference>
<dbReference type="InterPro" id="IPR008979">
    <property type="entry name" value="Galactose-bd-like_sf"/>
</dbReference>
<dbReference type="PANTHER" id="PTHR12936">
    <property type="entry name" value="ANAPHASE-PROMOTING COMPLEX 10"/>
    <property type="match status" value="1"/>
</dbReference>
<dbReference type="PANTHER" id="PTHR12936:SF0">
    <property type="entry name" value="ANAPHASE-PROMOTING COMPLEX SUBUNIT 10"/>
    <property type="match status" value="1"/>
</dbReference>
<dbReference type="Pfam" id="PF03256">
    <property type="entry name" value="ANAPC10"/>
    <property type="match status" value="1"/>
</dbReference>
<dbReference type="PIRSF" id="PIRSF028841">
    <property type="entry name" value="APC10_sub"/>
    <property type="match status" value="1"/>
</dbReference>
<dbReference type="SMART" id="SM01337">
    <property type="entry name" value="APC10"/>
    <property type="match status" value="1"/>
</dbReference>
<dbReference type="SUPFAM" id="SSF49785">
    <property type="entry name" value="Galactose-binding domain-like"/>
    <property type="match status" value="1"/>
</dbReference>
<dbReference type="PROSITE" id="PS51284">
    <property type="entry name" value="DOC"/>
    <property type="match status" value="1"/>
</dbReference>
<sequence>MAASMDEDITANPPPSSEEDPLAEERLGFVREVGAQAVWSLSSCKPGFGVERLRDNIMDTYWQSDGQLPHLVNIQFHKRTNISQIYIYTDYKLDESYTPSRISIRSGTNFNDLQELQVMDLTEPTGWVQIPIKDGNVKSIRTFMLQIAVISNHQNGRDTHMRQIRIHAPVEGKHYPLELFGKFGTVDFQKFATIR</sequence>
<protein>
    <recommendedName>
        <fullName>Anaphase-promoting complex subunit 10</fullName>
        <shortName>APC10</shortName>
    </recommendedName>
    <alternativeName>
        <fullName>Cyclosome subunit 10</fullName>
    </alternativeName>
</protein>
<organism>
    <name type="scientific">Drosophila melanogaster</name>
    <name type="common">Fruit fly</name>
    <dbReference type="NCBI Taxonomy" id="7227"/>
    <lineage>
        <taxon>Eukaryota</taxon>
        <taxon>Metazoa</taxon>
        <taxon>Ecdysozoa</taxon>
        <taxon>Arthropoda</taxon>
        <taxon>Hexapoda</taxon>
        <taxon>Insecta</taxon>
        <taxon>Pterygota</taxon>
        <taxon>Neoptera</taxon>
        <taxon>Endopterygota</taxon>
        <taxon>Diptera</taxon>
        <taxon>Brachycera</taxon>
        <taxon>Muscomorpha</taxon>
        <taxon>Ephydroidea</taxon>
        <taxon>Drosophilidae</taxon>
        <taxon>Drosophila</taxon>
        <taxon>Sophophora</taxon>
    </lineage>
</organism>
<evidence type="ECO:0000250" key="1"/>
<evidence type="ECO:0000255" key="2">
    <source>
        <dbReference type="PROSITE-ProRule" id="PRU00614"/>
    </source>
</evidence>
<evidence type="ECO:0000256" key="3">
    <source>
        <dbReference type="SAM" id="MobiDB-lite"/>
    </source>
</evidence>
<evidence type="ECO:0000305" key="4"/>
<reference key="1">
    <citation type="journal article" date="2000" name="Science">
        <title>The genome sequence of Drosophila melanogaster.</title>
        <authorList>
            <person name="Adams M.D."/>
            <person name="Celniker S.E."/>
            <person name="Holt R.A."/>
            <person name="Evans C.A."/>
            <person name="Gocayne J.D."/>
            <person name="Amanatides P.G."/>
            <person name="Scherer S.E."/>
            <person name="Li P.W."/>
            <person name="Hoskins R.A."/>
            <person name="Galle R.F."/>
            <person name="George R.A."/>
            <person name="Lewis S.E."/>
            <person name="Richards S."/>
            <person name="Ashburner M."/>
            <person name="Henderson S.N."/>
            <person name="Sutton G.G."/>
            <person name="Wortman J.R."/>
            <person name="Yandell M.D."/>
            <person name="Zhang Q."/>
            <person name="Chen L.X."/>
            <person name="Brandon R.C."/>
            <person name="Rogers Y.-H.C."/>
            <person name="Blazej R.G."/>
            <person name="Champe M."/>
            <person name="Pfeiffer B.D."/>
            <person name="Wan K.H."/>
            <person name="Doyle C."/>
            <person name="Baxter E.G."/>
            <person name="Helt G."/>
            <person name="Nelson C.R."/>
            <person name="Miklos G.L.G."/>
            <person name="Abril J.F."/>
            <person name="Agbayani A."/>
            <person name="An H.-J."/>
            <person name="Andrews-Pfannkoch C."/>
            <person name="Baldwin D."/>
            <person name="Ballew R.M."/>
            <person name="Basu A."/>
            <person name="Baxendale J."/>
            <person name="Bayraktaroglu L."/>
            <person name="Beasley E.M."/>
            <person name="Beeson K.Y."/>
            <person name="Benos P.V."/>
            <person name="Berman B.P."/>
            <person name="Bhandari D."/>
            <person name="Bolshakov S."/>
            <person name="Borkova D."/>
            <person name="Botchan M.R."/>
            <person name="Bouck J."/>
            <person name="Brokstein P."/>
            <person name="Brottier P."/>
            <person name="Burtis K.C."/>
            <person name="Busam D.A."/>
            <person name="Butler H."/>
            <person name="Cadieu E."/>
            <person name="Center A."/>
            <person name="Chandra I."/>
            <person name="Cherry J.M."/>
            <person name="Cawley S."/>
            <person name="Dahlke C."/>
            <person name="Davenport L.B."/>
            <person name="Davies P."/>
            <person name="de Pablos B."/>
            <person name="Delcher A."/>
            <person name="Deng Z."/>
            <person name="Mays A.D."/>
            <person name="Dew I."/>
            <person name="Dietz S.M."/>
            <person name="Dodson K."/>
            <person name="Doup L.E."/>
            <person name="Downes M."/>
            <person name="Dugan-Rocha S."/>
            <person name="Dunkov B.C."/>
            <person name="Dunn P."/>
            <person name="Durbin K.J."/>
            <person name="Evangelista C.C."/>
            <person name="Ferraz C."/>
            <person name="Ferriera S."/>
            <person name="Fleischmann W."/>
            <person name="Fosler C."/>
            <person name="Gabrielian A.E."/>
            <person name="Garg N.S."/>
            <person name="Gelbart W.M."/>
            <person name="Glasser K."/>
            <person name="Glodek A."/>
            <person name="Gong F."/>
            <person name="Gorrell J.H."/>
            <person name="Gu Z."/>
            <person name="Guan P."/>
            <person name="Harris M."/>
            <person name="Harris N.L."/>
            <person name="Harvey D.A."/>
            <person name="Heiman T.J."/>
            <person name="Hernandez J.R."/>
            <person name="Houck J."/>
            <person name="Hostin D."/>
            <person name="Houston K.A."/>
            <person name="Howland T.J."/>
            <person name="Wei M.-H."/>
            <person name="Ibegwam C."/>
            <person name="Jalali M."/>
            <person name="Kalush F."/>
            <person name="Karpen G.H."/>
            <person name="Ke Z."/>
            <person name="Kennison J.A."/>
            <person name="Ketchum K.A."/>
            <person name="Kimmel B.E."/>
            <person name="Kodira C.D."/>
            <person name="Kraft C.L."/>
            <person name="Kravitz S."/>
            <person name="Kulp D."/>
            <person name="Lai Z."/>
            <person name="Lasko P."/>
            <person name="Lei Y."/>
            <person name="Levitsky A.A."/>
            <person name="Li J.H."/>
            <person name="Li Z."/>
            <person name="Liang Y."/>
            <person name="Lin X."/>
            <person name="Liu X."/>
            <person name="Mattei B."/>
            <person name="McIntosh T.C."/>
            <person name="McLeod M.P."/>
            <person name="McPherson D."/>
            <person name="Merkulov G."/>
            <person name="Milshina N.V."/>
            <person name="Mobarry C."/>
            <person name="Morris J."/>
            <person name="Moshrefi A."/>
            <person name="Mount S.M."/>
            <person name="Moy M."/>
            <person name="Murphy B."/>
            <person name="Murphy L."/>
            <person name="Muzny D.M."/>
            <person name="Nelson D.L."/>
            <person name="Nelson D.R."/>
            <person name="Nelson K.A."/>
            <person name="Nixon K."/>
            <person name="Nusskern D.R."/>
            <person name="Pacleb J.M."/>
            <person name="Palazzolo M."/>
            <person name="Pittman G.S."/>
            <person name="Pan S."/>
            <person name="Pollard J."/>
            <person name="Puri V."/>
            <person name="Reese M.G."/>
            <person name="Reinert K."/>
            <person name="Remington K."/>
            <person name="Saunders R.D.C."/>
            <person name="Scheeler F."/>
            <person name="Shen H."/>
            <person name="Shue B.C."/>
            <person name="Siden-Kiamos I."/>
            <person name="Simpson M."/>
            <person name="Skupski M.P."/>
            <person name="Smith T.J."/>
            <person name="Spier E."/>
            <person name="Spradling A.C."/>
            <person name="Stapleton M."/>
            <person name="Strong R."/>
            <person name="Sun E."/>
            <person name="Svirskas R."/>
            <person name="Tector C."/>
            <person name="Turner R."/>
            <person name="Venter E."/>
            <person name="Wang A.H."/>
            <person name="Wang X."/>
            <person name="Wang Z.-Y."/>
            <person name="Wassarman D.A."/>
            <person name="Weinstock G.M."/>
            <person name="Weissenbach J."/>
            <person name="Williams S.M."/>
            <person name="Woodage T."/>
            <person name="Worley K.C."/>
            <person name="Wu D."/>
            <person name="Yang S."/>
            <person name="Yao Q.A."/>
            <person name="Ye J."/>
            <person name="Yeh R.-F."/>
            <person name="Zaveri J.S."/>
            <person name="Zhan M."/>
            <person name="Zhang G."/>
            <person name="Zhao Q."/>
            <person name="Zheng L."/>
            <person name="Zheng X.H."/>
            <person name="Zhong F.N."/>
            <person name="Zhong W."/>
            <person name="Zhou X."/>
            <person name="Zhu S.C."/>
            <person name="Zhu X."/>
            <person name="Smith H.O."/>
            <person name="Gibbs R.A."/>
            <person name="Myers E.W."/>
            <person name="Rubin G.M."/>
            <person name="Venter J.C."/>
        </authorList>
    </citation>
    <scope>NUCLEOTIDE SEQUENCE [LARGE SCALE GENOMIC DNA]</scope>
    <source>
        <strain>Berkeley</strain>
    </source>
</reference>
<reference key="2">
    <citation type="journal article" date="2002" name="Genome Biol.">
        <title>Annotation of the Drosophila melanogaster euchromatic genome: a systematic review.</title>
        <authorList>
            <person name="Misra S."/>
            <person name="Crosby M.A."/>
            <person name="Mungall C.J."/>
            <person name="Matthews B.B."/>
            <person name="Campbell K.S."/>
            <person name="Hradecky P."/>
            <person name="Huang Y."/>
            <person name="Kaminker J.S."/>
            <person name="Millburn G.H."/>
            <person name="Prochnik S.E."/>
            <person name="Smith C.D."/>
            <person name="Tupy J.L."/>
            <person name="Whitfield E.J."/>
            <person name="Bayraktaroglu L."/>
            <person name="Berman B.P."/>
            <person name="Bettencourt B.R."/>
            <person name="Celniker S.E."/>
            <person name="de Grey A.D.N.J."/>
            <person name="Drysdale R.A."/>
            <person name="Harris N.L."/>
            <person name="Richter J."/>
            <person name="Russo S."/>
            <person name="Schroeder A.J."/>
            <person name="Shu S.Q."/>
            <person name="Stapleton M."/>
            <person name="Yamada C."/>
            <person name="Ashburner M."/>
            <person name="Gelbart W.M."/>
            <person name="Rubin G.M."/>
            <person name="Lewis S.E."/>
        </authorList>
    </citation>
    <scope>GENOME REANNOTATION</scope>
    <source>
        <strain>Berkeley</strain>
    </source>
</reference>
<reference key="3">
    <citation type="journal article" date="2002" name="Genome Biol.">
        <title>A Drosophila full-length cDNA resource.</title>
        <authorList>
            <person name="Stapleton M."/>
            <person name="Carlson J.W."/>
            <person name="Brokstein P."/>
            <person name="Yu C."/>
            <person name="Champe M."/>
            <person name="George R.A."/>
            <person name="Guarin H."/>
            <person name="Kronmiller B."/>
            <person name="Pacleb J.M."/>
            <person name="Park S."/>
            <person name="Wan K.H."/>
            <person name="Rubin G.M."/>
            <person name="Celniker S.E."/>
        </authorList>
    </citation>
    <scope>NUCLEOTIDE SEQUENCE [LARGE SCALE MRNA]</scope>
    <source>
        <strain>Berkeley</strain>
        <tissue>Embryo</tissue>
    </source>
</reference>